<reference key="1">
    <citation type="journal article" date="2001" name="Proc. Natl. Acad. Sci. U.S.A.">
        <title>Genomic analysis of orthologous mouse and human olfactory receptor loci.</title>
        <authorList>
            <person name="Lane R.P."/>
            <person name="Cutforth T."/>
            <person name="Young J."/>
            <person name="Athanasiou M."/>
            <person name="Friedman C."/>
            <person name="Rowen L."/>
            <person name="Evans G."/>
            <person name="Axel R."/>
            <person name="Hood L."/>
            <person name="Trask B.J."/>
        </authorList>
    </citation>
    <scope>NUCLEOTIDE SEQUENCE [GENOMIC DNA]</scope>
    <source>
        <strain>129/SvJ</strain>
        <strain>C57BL/6J</strain>
    </source>
</reference>
<reference key="2">
    <citation type="journal article" date="2000" name="Mamm. Genome">
        <title>Characterization of a cluster comprising 100 odorant receptor genes in mouse.</title>
        <authorList>
            <person name="Xie S.Y."/>
            <person name="Feinstein P."/>
            <person name="Mombaerts P."/>
        </authorList>
    </citation>
    <scope>NUCLEOTIDE SEQUENCE [GENOMIC DNA]</scope>
    <source>
        <strain>129/SvJ</strain>
    </source>
</reference>
<reference key="3">
    <citation type="journal article" date="2002" name="Nat. Neurosci.">
        <title>The olfactory receptor gene superfamily of the mouse.</title>
        <authorList>
            <person name="Zhang X."/>
            <person name="Firestein S."/>
        </authorList>
    </citation>
    <scope>NUCLEOTIDE SEQUENCE [GENOMIC DNA]</scope>
</reference>
<reference key="4">
    <citation type="journal article" date="2002" name="Hum. Mol. Genet.">
        <title>Different evolutionary processes shaped the mouse and human olfactory receptor gene families.</title>
        <authorList>
            <person name="Young J.M."/>
            <person name="Friedman C."/>
            <person name="Williams E.M."/>
            <person name="Ross J.A."/>
            <person name="Tonnes-Priddy L."/>
            <person name="Trask B.J."/>
        </authorList>
    </citation>
    <scope>NUCLEOTIDE SEQUENCE [GENOMIC DNA]</scope>
</reference>
<reference key="5">
    <citation type="journal article" date="2002" name="Hum. Mol. Genet.">
        <authorList>
            <person name="Young J.M."/>
            <person name="Friedman C."/>
            <person name="Williams E.M."/>
            <person name="Ross J.A."/>
            <person name="Tonnes-Priddy L."/>
            <person name="Trask B.J."/>
        </authorList>
    </citation>
    <scope>ERRATUM OF PUBMED:11875048</scope>
</reference>
<reference key="6">
    <citation type="journal article" date="2004" name="Genome Res.">
        <title>The status, quality, and expansion of the NIH full-length cDNA project: the Mammalian Gene Collection (MGC).</title>
        <authorList>
            <consortium name="The MGC Project Team"/>
        </authorList>
    </citation>
    <scope>NUCLEOTIDE SEQUENCE [LARGE SCALE MRNA]</scope>
</reference>
<reference key="7">
    <citation type="journal article" date="1993" name="Cell">
        <title>A zonal organization of odorant receptor gene expression in the olfactory epithelium.</title>
        <authorList>
            <person name="Ressler K.J."/>
            <person name="Sullivan S.L."/>
            <person name="Buck L.B."/>
        </authorList>
    </citation>
    <scope>NUCLEOTIDE SEQUENCE [GENOMIC DNA] OF 59-280</scope>
    <source>
        <strain>C57BL/6J</strain>
        <tissue>Liver</tissue>
    </source>
</reference>
<proteinExistence type="evidence at transcript level"/>
<accession>P34986</accession>
<accession>A0PK63</accession>
<accession>Q9EPG1</accession>
<accession>Q9EPV0</accession>
<protein>
    <recommendedName>
        <fullName evidence="3">Olfactory receptor 6B9</fullName>
    </recommendedName>
    <alternativeName>
        <fullName>Odorant receptor M50</fullName>
    </alternativeName>
    <alternativeName>
        <fullName>Olfactory receptor 103-16</fullName>
    </alternativeName>
    <alternativeName>
        <fullName>Olfactory receptor 6</fullName>
    </alternativeName>
</protein>
<organism>
    <name type="scientific">Mus musculus</name>
    <name type="common">Mouse</name>
    <dbReference type="NCBI Taxonomy" id="10090"/>
    <lineage>
        <taxon>Eukaryota</taxon>
        <taxon>Metazoa</taxon>
        <taxon>Chordata</taxon>
        <taxon>Craniata</taxon>
        <taxon>Vertebrata</taxon>
        <taxon>Euteleostomi</taxon>
        <taxon>Mammalia</taxon>
        <taxon>Eutheria</taxon>
        <taxon>Euarchontoglires</taxon>
        <taxon>Glires</taxon>
        <taxon>Rodentia</taxon>
        <taxon>Myomorpha</taxon>
        <taxon>Muroidea</taxon>
        <taxon>Muridae</taxon>
        <taxon>Murinae</taxon>
        <taxon>Mus</taxon>
        <taxon>Mus</taxon>
    </lineage>
</organism>
<dbReference type="EMBL" id="AF321234">
    <property type="protein sequence ID" value="AAG45190.1"/>
    <property type="molecule type" value="Genomic_DNA"/>
</dbReference>
<dbReference type="EMBL" id="AF321236">
    <property type="protein sequence ID" value="AAG45202.1"/>
    <property type="molecule type" value="Genomic_DNA"/>
</dbReference>
<dbReference type="EMBL" id="AF293079">
    <property type="protein sequence ID" value="AAK97075.1"/>
    <property type="molecule type" value="Genomic_DNA"/>
</dbReference>
<dbReference type="EMBL" id="AY073741">
    <property type="protein sequence ID" value="AAL61404.1"/>
    <property type="molecule type" value="Genomic_DNA"/>
</dbReference>
<dbReference type="EMBL" id="AY317832">
    <property type="protein sequence ID" value="AAP71175.1"/>
    <property type="molecule type" value="Genomic_DNA"/>
</dbReference>
<dbReference type="EMBL" id="BC127998">
    <property type="protein sequence ID" value="AAI27999.1"/>
    <property type="molecule type" value="mRNA"/>
</dbReference>
<dbReference type="EMBL" id="L14567">
    <property type="protein sequence ID" value="AAA39851.1"/>
    <property type="molecule type" value="Genomic_DNA"/>
</dbReference>
<dbReference type="CCDS" id="CCDS21681.1"/>
<dbReference type="PIR" id="B40745">
    <property type="entry name" value="B40745"/>
</dbReference>
<dbReference type="RefSeq" id="NP_996780.2">
    <property type="nucleotide sequence ID" value="NM_206897.2"/>
</dbReference>
<dbReference type="SMR" id="P34986"/>
<dbReference type="FunCoup" id="P34986">
    <property type="interactions" value="1569"/>
</dbReference>
<dbReference type="STRING" id="10090.ENSMUSP00000048740"/>
<dbReference type="GlyCosmos" id="P34986">
    <property type="glycosylation" value="2 sites, No reported glycans"/>
</dbReference>
<dbReference type="GlyGen" id="P34986">
    <property type="glycosylation" value="2 sites"/>
</dbReference>
<dbReference type="PaxDb" id="10090-ENSMUSP00000048740"/>
<dbReference type="GeneID" id="233670"/>
<dbReference type="KEGG" id="mmu:233670"/>
<dbReference type="UCSC" id="uc009jao.1">
    <property type="organism name" value="mouse"/>
</dbReference>
<dbReference type="AGR" id="MGI:104713"/>
<dbReference type="CTD" id="233670"/>
<dbReference type="MGI" id="MGI:104713">
    <property type="gene designation" value="Or6b9"/>
</dbReference>
<dbReference type="eggNOG" id="ENOG502SJJZ">
    <property type="taxonomic scope" value="Eukaryota"/>
</dbReference>
<dbReference type="InParanoid" id="P34986"/>
<dbReference type="OrthoDB" id="10017003at2759"/>
<dbReference type="PhylomeDB" id="P34986"/>
<dbReference type="TreeFam" id="TF337475"/>
<dbReference type="BioGRID-ORCS" id="233670">
    <property type="hits" value="4 hits in 70 CRISPR screens"/>
</dbReference>
<dbReference type="PRO" id="PR:P34986"/>
<dbReference type="Proteomes" id="UP000000589">
    <property type="component" value="Unplaced"/>
</dbReference>
<dbReference type="RNAct" id="P34986">
    <property type="molecule type" value="protein"/>
</dbReference>
<dbReference type="GO" id="GO:0016020">
    <property type="term" value="C:membrane"/>
    <property type="evidence" value="ECO:0000247"/>
    <property type="project" value="MGI"/>
</dbReference>
<dbReference type="GO" id="GO:0005886">
    <property type="term" value="C:plasma membrane"/>
    <property type="evidence" value="ECO:0007669"/>
    <property type="project" value="UniProtKB-SubCell"/>
</dbReference>
<dbReference type="GO" id="GO:0004930">
    <property type="term" value="F:G protein-coupled receptor activity"/>
    <property type="evidence" value="ECO:0007669"/>
    <property type="project" value="UniProtKB-KW"/>
</dbReference>
<dbReference type="GO" id="GO:0004984">
    <property type="term" value="F:olfactory receptor activity"/>
    <property type="evidence" value="ECO:0000247"/>
    <property type="project" value="MGI"/>
</dbReference>
<dbReference type="GO" id="GO:0007186">
    <property type="term" value="P:G protein-coupled receptor signaling pathway"/>
    <property type="evidence" value="ECO:0000247"/>
    <property type="project" value="MGI"/>
</dbReference>
<dbReference type="GO" id="GO:0007608">
    <property type="term" value="P:sensory perception of smell"/>
    <property type="evidence" value="ECO:0000247"/>
    <property type="project" value="MGI"/>
</dbReference>
<dbReference type="CDD" id="cd15224">
    <property type="entry name" value="7tmA_OR6B-like"/>
    <property type="match status" value="1"/>
</dbReference>
<dbReference type="FunFam" id="1.10.1220.70:FF:000001">
    <property type="entry name" value="Olfactory receptor"/>
    <property type="match status" value="1"/>
</dbReference>
<dbReference type="FunFam" id="1.20.1070.10:FF:000001">
    <property type="entry name" value="Olfactory receptor"/>
    <property type="match status" value="1"/>
</dbReference>
<dbReference type="Gene3D" id="1.20.1070.10">
    <property type="entry name" value="Rhodopsin 7-helix transmembrane proteins"/>
    <property type="match status" value="1"/>
</dbReference>
<dbReference type="InterPro" id="IPR000276">
    <property type="entry name" value="GPCR_Rhodpsn"/>
</dbReference>
<dbReference type="InterPro" id="IPR017452">
    <property type="entry name" value="GPCR_Rhodpsn_7TM"/>
</dbReference>
<dbReference type="InterPro" id="IPR000725">
    <property type="entry name" value="Olfact_rcpt"/>
</dbReference>
<dbReference type="PANTHER" id="PTHR26453">
    <property type="entry name" value="OLFACTORY RECEPTOR"/>
    <property type="match status" value="1"/>
</dbReference>
<dbReference type="Pfam" id="PF13853">
    <property type="entry name" value="7tm_4"/>
    <property type="match status" value="1"/>
</dbReference>
<dbReference type="PRINTS" id="PR00237">
    <property type="entry name" value="GPCRRHODOPSN"/>
</dbReference>
<dbReference type="PRINTS" id="PR00245">
    <property type="entry name" value="OLFACTORYR"/>
</dbReference>
<dbReference type="SUPFAM" id="SSF81321">
    <property type="entry name" value="Family A G protein-coupled receptor-like"/>
    <property type="match status" value="1"/>
</dbReference>
<dbReference type="PROSITE" id="PS00237">
    <property type="entry name" value="G_PROTEIN_RECEP_F1_1"/>
    <property type="match status" value="1"/>
</dbReference>
<dbReference type="PROSITE" id="PS50262">
    <property type="entry name" value="G_PROTEIN_RECEP_F1_2"/>
    <property type="match status" value="1"/>
</dbReference>
<keyword id="KW-1003">Cell membrane</keyword>
<keyword id="KW-1015">Disulfide bond</keyword>
<keyword id="KW-0297">G-protein coupled receptor</keyword>
<keyword id="KW-0325">Glycoprotein</keyword>
<keyword id="KW-0472">Membrane</keyword>
<keyword id="KW-0552">Olfaction</keyword>
<keyword id="KW-0675">Receptor</keyword>
<keyword id="KW-1185">Reference proteome</keyword>
<keyword id="KW-0716">Sensory transduction</keyword>
<keyword id="KW-0807">Transducer</keyword>
<keyword id="KW-0812">Transmembrane</keyword>
<keyword id="KW-1133">Transmembrane helix</keyword>
<name>OR6B9_MOUSE</name>
<comment type="function">
    <text evidence="3">Odorant receptor.</text>
</comment>
<comment type="subcellular location">
    <subcellularLocation>
        <location evidence="3">Cell membrane</location>
        <topology evidence="1">Multi-pass membrane protein</topology>
    </subcellularLocation>
</comment>
<comment type="tissue specificity">
    <text>Olfactory epithelium.</text>
</comment>
<comment type="similarity">
    <text evidence="2">Belongs to the G-protein coupled receptor 1 family.</text>
</comment>
<feature type="chain" id="PRO_0000150806" description="Olfactory receptor 6B9">
    <location>
        <begin position="1"/>
        <end position="316"/>
    </location>
</feature>
<feature type="topological domain" description="Extracellular" evidence="1">
    <location>
        <begin position="1"/>
        <end position="22"/>
    </location>
</feature>
<feature type="transmembrane region" description="Helical; Name=1" evidence="1">
    <location>
        <begin position="23"/>
        <end position="43"/>
    </location>
</feature>
<feature type="topological domain" description="Cytoplasmic" evidence="1">
    <location>
        <begin position="44"/>
        <end position="64"/>
    </location>
</feature>
<feature type="transmembrane region" description="Helical; Name=2" evidence="1">
    <location>
        <begin position="65"/>
        <end position="85"/>
    </location>
</feature>
<feature type="topological domain" description="Extracellular" evidence="1">
    <location>
        <begin position="86"/>
        <end position="97"/>
    </location>
</feature>
<feature type="transmembrane region" description="Helical; Name=3" evidence="1">
    <location>
        <begin position="98"/>
        <end position="118"/>
    </location>
</feature>
<feature type="topological domain" description="Cytoplasmic" evidence="1">
    <location>
        <begin position="119"/>
        <end position="132"/>
    </location>
</feature>
<feature type="transmembrane region" description="Helical; Name=4" evidence="1">
    <location>
        <begin position="133"/>
        <end position="153"/>
    </location>
</feature>
<feature type="topological domain" description="Extracellular" evidence="1">
    <location>
        <begin position="154"/>
        <end position="199"/>
    </location>
</feature>
<feature type="transmembrane region" description="Helical; Name=5" evidence="1">
    <location>
        <begin position="200"/>
        <end position="220"/>
    </location>
</feature>
<feature type="topological domain" description="Cytoplasmic" evidence="1">
    <location>
        <begin position="221"/>
        <end position="237"/>
    </location>
</feature>
<feature type="transmembrane region" description="Helical; Name=6" evidence="1">
    <location>
        <begin position="238"/>
        <end position="258"/>
    </location>
</feature>
<feature type="topological domain" description="Extracellular" evidence="1">
    <location>
        <begin position="259"/>
        <end position="269"/>
    </location>
</feature>
<feature type="transmembrane region" description="Helical; Name=7" evidence="1">
    <location>
        <begin position="270"/>
        <end position="290"/>
    </location>
</feature>
<feature type="topological domain" description="Cytoplasmic" evidence="1">
    <location>
        <begin position="291"/>
        <end position="316"/>
    </location>
</feature>
<feature type="glycosylation site" description="N-linked (GlcNAc...) asparagine" evidence="1">
    <location>
        <position position="3"/>
    </location>
</feature>
<feature type="glycosylation site" description="N-linked (GlcNAc...) asparagine" evidence="1">
    <location>
        <position position="6"/>
    </location>
</feature>
<feature type="disulfide bond" evidence="2">
    <location>
        <begin position="95"/>
        <end position="187"/>
    </location>
</feature>
<feature type="sequence conflict" description="In Ref. 1; AAG45190 and 6; AAA39851." evidence="3" ref="1 6">
    <original>R</original>
    <variation>H</variation>
    <location>
        <position position="86"/>
    </location>
</feature>
<feature type="sequence conflict" description="In Ref. 1; AAG45190 and 6; AAA39851." evidence="3" ref="1 6">
    <original>I</original>
    <variation>L</variation>
    <location>
        <position position="161"/>
    </location>
</feature>
<gene>
    <name evidence="4" type="primary">Or6b9</name>
    <name evidence="4" type="synonym">Mor103-16</name>
    <name evidence="4" type="synonym">Olfr6</name>
</gene>
<sequence>MENITNISEFILMGFPTAPWLQILLFSIFFITYVFVLLENLVIILTVWVTGSLHKPMYYFLSTMSFLEAWYISVTVPKMLAGFLFRPNTISFLGCMTQLYFFMSLACTECVLLAAMAYDRYVAICWPLRYPVMMTTGFCVQLTISSWVSGFTISMAKVYFISRVAFCGNNVLNHFFCDVSPILKLACMNLSMAETVDFALAIVILIFPLSATVLSYGFIVSTVLQIPSATGQRKAFSTCASHLTVVVIFYTAVIFMYVRPRAIASFNSNKLISAIYAVFTPMLNPIIYCLRNKEVKDAIRKTIAGGRAPALGESIS</sequence>
<evidence type="ECO:0000255" key="1"/>
<evidence type="ECO:0000255" key="2">
    <source>
        <dbReference type="PROSITE-ProRule" id="PRU00521"/>
    </source>
</evidence>
<evidence type="ECO:0000305" key="3"/>
<evidence type="ECO:0000312" key="4">
    <source>
        <dbReference type="MGI" id="MGI:104713"/>
    </source>
</evidence>